<sequence>MENQPKLNSSKEVIAFLAERFPLCFTAEGEARPLKIGIFQDLVERVQGEENLSKTQLRSALRLYTSSWRYLYGVKVGAERVDLDGNPCGVLEEQHVEHARKQLEEAKARVQAQRAEQQAKKREAAIAAGETPEPRRPRPAGKKPAPRREAGAAPENRKPRQSPRPQQVRPPRPQVEENQPRPVPVTDISKLQIGQEIKVRAGKSAMDATVLEIAKDGVRVQLSSGLAMIVRAEHLQF</sequence>
<reference key="1">
    <citation type="journal article" date="2001" name="Nature">
        <title>Genome sequence of Yersinia pestis, the causative agent of plague.</title>
        <authorList>
            <person name="Parkhill J."/>
            <person name="Wren B.W."/>
            <person name="Thomson N.R."/>
            <person name="Titball R.W."/>
            <person name="Holden M.T.G."/>
            <person name="Prentice M.B."/>
            <person name="Sebaihia M."/>
            <person name="James K.D."/>
            <person name="Churcher C.M."/>
            <person name="Mungall K.L."/>
            <person name="Baker S."/>
            <person name="Basham D."/>
            <person name="Bentley S.D."/>
            <person name="Brooks K."/>
            <person name="Cerdeno-Tarraga A.-M."/>
            <person name="Chillingworth T."/>
            <person name="Cronin A."/>
            <person name="Davies R.M."/>
            <person name="Davis P."/>
            <person name="Dougan G."/>
            <person name="Feltwell T."/>
            <person name="Hamlin N."/>
            <person name="Holroyd S."/>
            <person name="Jagels K."/>
            <person name="Karlyshev A.V."/>
            <person name="Leather S."/>
            <person name="Moule S."/>
            <person name="Oyston P.C.F."/>
            <person name="Quail M.A."/>
            <person name="Rutherford K.M."/>
            <person name="Simmonds M."/>
            <person name="Skelton J."/>
            <person name="Stevens K."/>
            <person name="Whitehead S."/>
            <person name="Barrell B.G."/>
        </authorList>
    </citation>
    <scope>NUCLEOTIDE SEQUENCE [LARGE SCALE GENOMIC DNA]</scope>
    <source>
        <strain>CO-92 / Biovar Orientalis</strain>
    </source>
</reference>
<reference key="2">
    <citation type="journal article" date="2002" name="J. Bacteriol.">
        <title>Genome sequence of Yersinia pestis KIM.</title>
        <authorList>
            <person name="Deng W."/>
            <person name="Burland V."/>
            <person name="Plunkett G. III"/>
            <person name="Boutin A."/>
            <person name="Mayhew G.F."/>
            <person name="Liss P."/>
            <person name="Perna N.T."/>
            <person name="Rose D.J."/>
            <person name="Mau B."/>
            <person name="Zhou S."/>
            <person name="Schwartz D.C."/>
            <person name="Fetherston J.D."/>
            <person name="Lindler L.E."/>
            <person name="Brubaker R.R."/>
            <person name="Plano G.V."/>
            <person name="Straley S.C."/>
            <person name="McDonough K.A."/>
            <person name="Nilles M.L."/>
            <person name="Matson J.S."/>
            <person name="Blattner F.R."/>
            <person name="Perry R.D."/>
        </authorList>
    </citation>
    <scope>NUCLEOTIDE SEQUENCE [LARGE SCALE GENOMIC DNA]</scope>
    <source>
        <strain>KIM10+ / Biovar Mediaevalis</strain>
    </source>
</reference>
<reference key="3">
    <citation type="journal article" date="2004" name="DNA Res.">
        <title>Complete genome sequence of Yersinia pestis strain 91001, an isolate avirulent to humans.</title>
        <authorList>
            <person name="Song Y."/>
            <person name="Tong Z."/>
            <person name="Wang J."/>
            <person name="Wang L."/>
            <person name="Guo Z."/>
            <person name="Han Y."/>
            <person name="Zhang J."/>
            <person name="Pei D."/>
            <person name="Zhou D."/>
            <person name="Qin H."/>
            <person name="Pang X."/>
            <person name="Han Y."/>
            <person name="Zhai J."/>
            <person name="Li M."/>
            <person name="Cui B."/>
            <person name="Qi Z."/>
            <person name="Jin L."/>
            <person name="Dai R."/>
            <person name="Chen F."/>
            <person name="Li S."/>
            <person name="Ye C."/>
            <person name="Du Z."/>
            <person name="Lin W."/>
            <person name="Wang J."/>
            <person name="Yu J."/>
            <person name="Yang H."/>
            <person name="Wang J."/>
            <person name="Huang P."/>
            <person name="Yang R."/>
        </authorList>
    </citation>
    <scope>NUCLEOTIDE SEQUENCE [LARGE SCALE GENOMIC DNA]</scope>
    <source>
        <strain>91001 / Biovar Mediaevalis</strain>
    </source>
</reference>
<accession>Q8ZFJ9</accession>
<accession>Q0WG81</accession>
<comment type="function">
    <text evidence="1">RNA chaperone with significant RNA binding, RNA strand exchange and RNA duplexing activities. May regulate ProP activity through an RNA-based, post-transcriptional mechanism.</text>
</comment>
<comment type="subcellular location">
    <subcellularLocation>
        <location evidence="1">Cytoplasm</location>
    </subcellularLocation>
</comment>
<comment type="similarity">
    <text evidence="1">Belongs to the ProQ family.</text>
</comment>
<protein>
    <recommendedName>
        <fullName evidence="1">RNA chaperone ProQ</fullName>
    </recommendedName>
</protein>
<feature type="chain" id="PRO_0000214629" description="RNA chaperone ProQ">
    <location>
        <begin position="1"/>
        <end position="237"/>
    </location>
</feature>
<feature type="region of interest" description="Disordered" evidence="2">
    <location>
        <begin position="106"/>
        <end position="188"/>
    </location>
</feature>
<feature type="compositionally biased region" description="Basic and acidic residues" evidence="2">
    <location>
        <begin position="146"/>
        <end position="158"/>
    </location>
</feature>
<name>PROQ_YERPE</name>
<dbReference type="EMBL" id="AL590842">
    <property type="protein sequence ID" value="CAL20347.1"/>
    <property type="molecule type" value="Genomic_DNA"/>
</dbReference>
<dbReference type="EMBL" id="AE009952">
    <property type="protein sequence ID" value="AAM85433.1"/>
    <property type="molecule type" value="Genomic_DNA"/>
</dbReference>
<dbReference type="EMBL" id="AE017042">
    <property type="protein sequence ID" value="AAS61957.1"/>
    <property type="molecule type" value="Genomic_DNA"/>
</dbReference>
<dbReference type="PIR" id="AH0207">
    <property type="entry name" value="AH0207"/>
</dbReference>
<dbReference type="RefSeq" id="WP_002210849.1">
    <property type="nucleotide sequence ID" value="NZ_WUCM01000041.1"/>
</dbReference>
<dbReference type="RefSeq" id="YP_002346707.1">
    <property type="nucleotide sequence ID" value="NC_003143.1"/>
</dbReference>
<dbReference type="SMR" id="Q8ZFJ9"/>
<dbReference type="STRING" id="214092.YPO1704"/>
<dbReference type="PaxDb" id="214092-YPO1704"/>
<dbReference type="DNASU" id="1146813"/>
<dbReference type="EnsemblBacteria" id="AAS61957">
    <property type="protein sequence ID" value="AAS61957"/>
    <property type="gene ID" value="YP_1729"/>
</dbReference>
<dbReference type="GeneID" id="96665860"/>
<dbReference type="KEGG" id="ype:YPO1704"/>
<dbReference type="KEGG" id="ypk:y1866"/>
<dbReference type="KEGG" id="ypm:YP_1729"/>
<dbReference type="PATRIC" id="fig|214092.21.peg.2055"/>
<dbReference type="eggNOG" id="COG3109">
    <property type="taxonomic scope" value="Bacteria"/>
</dbReference>
<dbReference type="HOGENOM" id="CLU_113254_0_0_6"/>
<dbReference type="OMA" id="WRYLKGV"/>
<dbReference type="OrthoDB" id="8421419at2"/>
<dbReference type="Proteomes" id="UP000000815">
    <property type="component" value="Chromosome"/>
</dbReference>
<dbReference type="Proteomes" id="UP000001019">
    <property type="component" value="Chromosome"/>
</dbReference>
<dbReference type="Proteomes" id="UP000002490">
    <property type="component" value="Chromosome"/>
</dbReference>
<dbReference type="GO" id="GO:0005829">
    <property type="term" value="C:cytosol"/>
    <property type="evidence" value="ECO:0000318"/>
    <property type="project" value="GO_Central"/>
</dbReference>
<dbReference type="GO" id="GO:0033592">
    <property type="term" value="F:RNA strand annealing activity"/>
    <property type="evidence" value="ECO:0000318"/>
    <property type="project" value="GO_Central"/>
</dbReference>
<dbReference type="GO" id="GO:0034057">
    <property type="term" value="F:RNA strand-exchange activity"/>
    <property type="evidence" value="ECO:0000318"/>
    <property type="project" value="GO_Central"/>
</dbReference>
<dbReference type="GO" id="GO:0010608">
    <property type="term" value="P:post-transcriptional regulation of gene expression"/>
    <property type="evidence" value="ECO:0000318"/>
    <property type="project" value="GO_Central"/>
</dbReference>
<dbReference type="FunFam" id="1.10.1710.10:FF:000001">
    <property type="entry name" value="RNA chaperone ProQ"/>
    <property type="match status" value="1"/>
</dbReference>
<dbReference type="Gene3D" id="1.10.1710.10">
    <property type="entry name" value="ProQ/FinO domain"/>
    <property type="match status" value="1"/>
</dbReference>
<dbReference type="HAMAP" id="MF_00749">
    <property type="entry name" value="ProQ"/>
    <property type="match status" value="1"/>
</dbReference>
<dbReference type="InterPro" id="IPR023529">
    <property type="entry name" value="ProQ"/>
</dbReference>
<dbReference type="InterPro" id="IPR016103">
    <property type="entry name" value="ProQ/FinO"/>
</dbReference>
<dbReference type="InterPro" id="IPR036442">
    <property type="entry name" value="ProQ/FinO_sf"/>
</dbReference>
<dbReference type="InterPro" id="IPR035236">
    <property type="entry name" value="ProQ_C"/>
</dbReference>
<dbReference type="NCBIfam" id="NF003434">
    <property type="entry name" value="PRK04950.1"/>
    <property type="match status" value="1"/>
</dbReference>
<dbReference type="PANTHER" id="PTHR38106">
    <property type="entry name" value="RNA CHAPERONE PROQ"/>
    <property type="match status" value="1"/>
</dbReference>
<dbReference type="PANTHER" id="PTHR38106:SF1">
    <property type="entry name" value="RNA CHAPERONE PROQ"/>
    <property type="match status" value="1"/>
</dbReference>
<dbReference type="Pfam" id="PF04352">
    <property type="entry name" value="ProQ"/>
    <property type="match status" value="1"/>
</dbReference>
<dbReference type="Pfam" id="PF17516">
    <property type="entry name" value="ProQ_C"/>
    <property type="match status" value="1"/>
</dbReference>
<dbReference type="SMART" id="SM00945">
    <property type="entry name" value="ProQ"/>
    <property type="match status" value="1"/>
</dbReference>
<dbReference type="SUPFAM" id="SSF48657">
    <property type="entry name" value="FinO-like"/>
    <property type="match status" value="1"/>
</dbReference>
<organism>
    <name type="scientific">Yersinia pestis</name>
    <dbReference type="NCBI Taxonomy" id="632"/>
    <lineage>
        <taxon>Bacteria</taxon>
        <taxon>Pseudomonadati</taxon>
        <taxon>Pseudomonadota</taxon>
        <taxon>Gammaproteobacteria</taxon>
        <taxon>Enterobacterales</taxon>
        <taxon>Yersiniaceae</taxon>
        <taxon>Yersinia</taxon>
    </lineage>
</organism>
<evidence type="ECO:0000255" key="1">
    <source>
        <dbReference type="HAMAP-Rule" id="MF_00749"/>
    </source>
</evidence>
<evidence type="ECO:0000256" key="2">
    <source>
        <dbReference type="SAM" id="MobiDB-lite"/>
    </source>
</evidence>
<keyword id="KW-0143">Chaperone</keyword>
<keyword id="KW-0963">Cytoplasm</keyword>
<keyword id="KW-1185">Reference proteome</keyword>
<keyword id="KW-0694">RNA-binding</keyword>
<proteinExistence type="inferred from homology"/>
<gene>
    <name evidence="1" type="primary">proQ</name>
    <name type="ordered locus">YPO1704</name>
    <name type="ordered locus">y1866</name>
    <name type="ordered locus">YP_1729</name>
</gene>